<protein>
    <recommendedName>
        <fullName evidence="1">Ferredoxin--NADP reductase</fullName>
        <shortName evidence="1">FNR</shortName>
        <shortName evidence="1">Fd-NADP(+) reductase</shortName>
        <ecNumber evidence="1">1.18.1.2</ecNumber>
    </recommendedName>
</protein>
<gene>
    <name type="ordered locus">BCE33L4658</name>
</gene>
<evidence type="ECO:0000255" key="1">
    <source>
        <dbReference type="HAMAP-Rule" id="MF_01685"/>
    </source>
</evidence>
<proteinExistence type="inferred from homology"/>
<accession>Q632D6</accession>
<name>FENR_BACCZ</name>
<organism>
    <name type="scientific">Bacillus cereus (strain ZK / E33L)</name>
    <dbReference type="NCBI Taxonomy" id="288681"/>
    <lineage>
        <taxon>Bacteria</taxon>
        <taxon>Bacillati</taxon>
        <taxon>Bacillota</taxon>
        <taxon>Bacilli</taxon>
        <taxon>Bacillales</taxon>
        <taxon>Bacillaceae</taxon>
        <taxon>Bacillus</taxon>
        <taxon>Bacillus cereus group</taxon>
    </lineage>
</organism>
<sequence>MKVAENQKVYDITIIGGGPTGLFTAFYGGMRQASVKIIESLPQLGGQLSALYPEKYIYDVAGFPKVRAQELVDNLKEQMKKFDPTVCLEEAVDTLEKQADGIFKLVTNKQTHYSKSVIITAGNGAFQPRRLELEGTAKYEKKNLHYFVDDMNKFAGKRVVVFGGGDSAVDWTMMLEPIADKVTIVHRRDKFRAHEHSVESLMNSRAEVSTPYVPVELIGDDKIEQVVLQHVKTEEKIIIDVDDVIVNYGFVSSLGPIKNWGLDIQKNSILVNSKMETNIPGIYAAGDICTYEGKVKLIACGFGEAPTAVNNAKAYFDPNAKLQPMHSSSMF</sequence>
<keyword id="KW-0274">FAD</keyword>
<keyword id="KW-0285">Flavoprotein</keyword>
<keyword id="KW-0521">NADP</keyword>
<keyword id="KW-0560">Oxidoreductase</keyword>
<dbReference type="EC" id="1.18.1.2" evidence="1"/>
<dbReference type="EMBL" id="CP000001">
    <property type="protein sequence ID" value="AAU15616.1"/>
    <property type="molecule type" value="Genomic_DNA"/>
</dbReference>
<dbReference type="SMR" id="Q632D6"/>
<dbReference type="KEGG" id="bcz:BCE33L4658"/>
<dbReference type="Proteomes" id="UP000002612">
    <property type="component" value="Chromosome"/>
</dbReference>
<dbReference type="GO" id="GO:0004324">
    <property type="term" value="F:ferredoxin-NADP+ reductase activity"/>
    <property type="evidence" value="ECO:0007669"/>
    <property type="project" value="UniProtKB-UniRule"/>
</dbReference>
<dbReference type="GO" id="GO:0050660">
    <property type="term" value="F:flavin adenine dinucleotide binding"/>
    <property type="evidence" value="ECO:0007669"/>
    <property type="project" value="UniProtKB-UniRule"/>
</dbReference>
<dbReference type="GO" id="GO:0050661">
    <property type="term" value="F:NADP binding"/>
    <property type="evidence" value="ECO:0007669"/>
    <property type="project" value="UniProtKB-UniRule"/>
</dbReference>
<dbReference type="Gene3D" id="3.50.50.60">
    <property type="entry name" value="FAD/NAD(P)-binding domain"/>
    <property type="match status" value="2"/>
</dbReference>
<dbReference type="HAMAP" id="MF_01685">
    <property type="entry name" value="FENR2"/>
    <property type="match status" value="1"/>
</dbReference>
<dbReference type="InterPro" id="IPR036188">
    <property type="entry name" value="FAD/NAD-bd_sf"/>
</dbReference>
<dbReference type="InterPro" id="IPR023753">
    <property type="entry name" value="FAD/NAD-binding_dom"/>
</dbReference>
<dbReference type="InterPro" id="IPR022890">
    <property type="entry name" value="Fd--NADP_Rdtase_type_2"/>
</dbReference>
<dbReference type="InterPro" id="IPR050097">
    <property type="entry name" value="Ferredoxin-NADP_redctase_2"/>
</dbReference>
<dbReference type="PANTHER" id="PTHR48105">
    <property type="entry name" value="THIOREDOXIN REDUCTASE 1-RELATED-RELATED"/>
    <property type="match status" value="1"/>
</dbReference>
<dbReference type="Pfam" id="PF07992">
    <property type="entry name" value="Pyr_redox_2"/>
    <property type="match status" value="1"/>
</dbReference>
<dbReference type="PRINTS" id="PR00368">
    <property type="entry name" value="FADPNR"/>
</dbReference>
<dbReference type="PRINTS" id="PR00469">
    <property type="entry name" value="PNDRDTASEII"/>
</dbReference>
<dbReference type="SUPFAM" id="SSF51905">
    <property type="entry name" value="FAD/NAD(P)-binding domain"/>
    <property type="match status" value="1"/>
</dbReference>
<feature type="chain" id="PRO_0000364791" description="Ferredoxin--NADP reductase">
    <location>
        <begin position="1"/>
        <end position="331"/>
    </location>
</feature>
<feature type="binding site" evidence="1">
    <location>
        <position position="20"/>
    </location>
    <ligand>
        <name>FAD</name>
        <dbReference type="ChEBI" id="CHEBI:57692"/>
    </ligand>
</feature>
<feature type="binding site" evidence="1">
    <location>
        <position position="39"/>
    </location>
    <ligand>
        <name>FAD</name>
        <dbReference type="ChEBI" id="CHEBI:57692"/>
    </ligand>
</feature>
<feature type="binding site" evidence="1">
    <location>
        <position position="47"/>
    </location>
    <ligand>
        <name>FAD</name>
        <dbReference type="ChEBI" id="CHEBI:57692"/>
    </ligand>
</feature>
<feature type="binding site" evidence="1">
    <location>
        <position position="52"/>
    </location>
    <ligand>
        <name>FAD</name>
        <dbReference type="ChEBI" id="CHEBI:57692"/>
    </ligand>
</feature>
<feature type="binding site" evidence="1">
    <location>
        <position position="92"/>
    </location>
    <ligand>
        <name>FAD</name>
        <dbReference type="ChEBI" id="CHEBI:57692"/>
    </ligand>
</feature>
<feature type="binding site" evidence="1">
    <location>
        <position position="126"/>
    </location>
    <ligand>
        <name>FAD</name>
        <dbReference type="ChEBI" id="CHEBI:57692"/>
    </ligand>
</feature>
<feature type="binding site" evidence="1">
    <location>
        <position position="287"/>
    </location>
    <ligand>
        <name>FAD</name>
        <dbReference type="ChEBI" id="CHEBI:57692"/>
    </ligand>
</feature>
<feature type="binding site" evidence="1">
    <location>
        <position position="328"/>
    </location>
    <ligand>
        <name>FAD</name>
        <dbReference type="ChEBI" id="CHEBI:57692"/>
    </ligand>
</feature>
<comment type="catalytic activity">
    <reaction evidence="1">
        <text>2 reduced [2Fe-2S]-[ferredoxin] + NADP(+) + H(+) = 2 oxidized [2Fe-2S]-[ferredoxin] + NADPH</text>
        <dbReference type="Rhea" id="RHEA:20125"/>
        <dbReference type="Rhea" id="RHEA-COMP:10000"/>
        <dbReference type="Rhea" id="RHEA-COMP:10001"/>
        <dbReference type="ChEBI" id="CHEBI:15378"/>
        <dbReference type="ChEBI" id="CHEBI:33737"/>
        <dbReference type="ChEBI" id="CHEBI:33738"/>
        <dbReference type="ChEBI" id="CHEBI:57783"/>
        <dbReference type="ChEBI" id="CHEBI:58349"/>
        <dbReference type="EC" id="1.18.1.2"/>
    </reaction>
</comment>
<comment type="cofactor">
    <cofactor evidence="1">
        <name>FAD</name>
        <dbReference type="ChEBI" id="CHEBI:57692"/>
    </cofactor>
    <text evidence="1">Binds 1 FAD per subunit.</text>
</comment>
<comment type="subunit">
    <text evidence="1">Homodimer.</text>
</comment>
<comment type="similarity">
    <text evidence="1">Belongs to the ferredoxin--NADP reductase type 2 family.</text>
</comment>
<reference key="1">
    <citation type="journal article" date="2006" name="J. Bacteriol.">
        <title>Pathogenomic sequence analysis of Bacillus cereus and Bacillus thuringiensis isolates closely related to Bacillus anthracis.</title>
        <authorList>
            <person name="Han C.S."/>
            <person name="Xie G."/>
            <person name="Challacombe J.F."/>
            <person name="Altherr M.R."/>
            <person name="Bhotika S.S."/>
            <person name="Bruce D."/>
            <person name="Campbell C.S."/>
            <person name="Campbell M.L."/>
            <person name="Chen J."/>
            <person name="Chertkov O."/>
            <person name="Cleland C."/>
            <person name="Dimitrijevic M."/>
            <person name="Doggett N.A."/>
            <person name="Fawcett J.J."/>
            <person name="Glavina T."/>
            <person name="Goodwin L.A."/>
            <person name="Hill K.K."/>
            <person name="Hitchcock P."/>
            <person name="Jackson P.J."/>
            <person name="Keim P."/>
            <person name="Kewalramani A.R."/>
            <person name="Longmire J."/>
            <person name="Lucas S."/>
            <person name="Malfatti S."/>
            <person name="McMurry K."/>
            <person name="Meincke L.J."/>
            <person name="Misra M."/>
            <person name="Moseman B.L."/>
            <person name="Mundt M."/>
            <person name="Munk A.C."/>
            <person name="Okinaka R.T."/>
            <person name="Parson-Quintana B."/>
            <person name="Reilly L.P."/>
            <person name="Richardson P."/>
            <person name="Robinson D.L."/>
            <person name="Rubin E."/>
            <person name="Saunders E."/>
            <person name="Tapia R."/>
            <person name="Tesmer J.G."/>
            <person name="Thayer N."/>
            <person name="Thompson L.S."/>
            <person name="Tice H."/>
            <person name="Ticknor L.O."/>
            <person name="Wills P.L."/>
            <person name="Brettin T.S."/>
            <person name="Gilna P."/>
        </authorList>
    </citation>
    <scope>NUCLEOTIDE SEQUENCE [LARGE SCALE GENOMIC DNA]</scope>
    <source>
        <strain>ZK / E33L</strain>
    </source>
</reference>